<comment type="function">
    <text evidence="1">Required for formate dehydrogenase (FDH) activity. Acts as a sulfur carrier protein that transfers sulfur from IscS to the molybdenum cofactor prior to its insertion into FDH.</text>
</comment>
<comment type="subcellular location">
    <subcellularLocation>
        <location evidence="1">Cytoplasm</location>
    </subcellularLocation>
</comment>
<comment type="similarity">
    <text evidence="1">Belongs to the FdhD family.</text>
</comment>
<evidence type="ECO:0000255" key="1">
    <source>
        <dbReference type="HAMAP-Rule" id="MF_00187"/>
    </source>
</evidence>
<accession>B4EBD9</accession>
<protein>
    <recommendedName>
        <fullName evidence="1">Sulfur carrier protein FdhD</fullName>
    </recommendedName>
</protein>
<keyword id="KW-0963">Cytoplasm</keyword>
<keyword id="KW-0501">Molybdenum cofactor biosynthesis</keyword>
<sequence>MNPTQSDELRDEPRGAIELPVSRTRGGAVDTAHDFVGQEWPVALVFNGISHAVMMCTPCDLEAFAVGFAISEGIVARGSDIKDIEVILHADAPLPHAEVHLDVVQQAFAALKDRRRALAGRTGCGVCGIESIDLLDLAPERVPDTGFLARLAPDALARAAHALPAHQALTKLTGGLHAAAWCDATGAIRAAFEDVGRHNALDKLIGSLVLSRADTTDGFVFLSSRASYELVRKAARVGIPLVATISAPSSLAIEIAKAAGLRLVSFCRETGHVDYGTV</sequence>
<reference key="1">
    <citation type="journal article" date="2009" name="J. Bacteriol.">
        <title>The genome of Burkholderia cenocepacia J2315, an epidemic pathogen of cystic fibrosis patients.</title>
        <authorList>
            <person name="Holden M.T."/>
            <person name="Seth-Smith H.M."/>
            <person name="Crossman L.C."/>
            <person name="Sebaihia M."/>
            <person name="Bentley S.D."/>
            <person name="Cerdeno-Tarraga A.M."/>
            <person name="Thomson N.R."/>
            <person name="Bason N."/>
            <person name="Quail M.A."/>
            <person name="Sharp S."/>
            <person name="Cherevach I."/>
            <person name="Churcher C."/>
            <person name="Goodhead I."/>
            <person name="Hauser H."/>
            <person name="Holroyd N."/>
            <person name="Mungall K."/>
            <person name="Scott P."/>
            <person name="Walker D."/>
            <person name="White B."/>
            <person name="Rose H."/>
            <person name="Iversen P."/>
            <person name="Mil-Homens D."/>
            <person name="Rocha E.P."/>
            <person name="Fialho A.M."/>
            <person name="Baldwin A."/>
            <person name="Dowson C."/>
            <person name="Barrell B.G."/>
            <person name="Govan J.R."/>
            <person name="Vandamme P."/>
            <person name="Hart C.A."/>
            <person name="Mahenthiralingam E."/>
            <person name="Parkhill J."/>
        </authorList>
    </citation>
    <scope>NUCLEOTIDE SEQUENCE [LARGE SCALE GENOMIC DNA]</scope>
    <source>
        <strain>ATCC BAA-245 / DSM 16553 / LMG 16656 / NCTC 13227 / J2315 / CF5610</strain>
    </source>
</reference>
<dbReference type="EMBL" id="AM747720">
    <property type="protein sequence ID" value="CAR51194.1"/>
    <property type="molecule type" value="Genomic_DNA"/>
</dbReference>
<dbReference type="RefSeq" id="WP_012492414.1">
    <property type="nucleotide sequence ID" value="NC_011000.1"/>
</dbReference>
<dbReference type="SMR" id="B4EBD9"/>
<dbReference type="KEGG" id="bcj:BCAL0888"/>
<dbReference type="eggNOG" id="COG1526">
    <property type="taxonomic scope" value="Bacteria"/>
</dbReference>
<dbReference type="HOGENOM" id="CLU_056887_2_0_4"/>
<dbReference type="BioCyc" id="BCEN216591:G1G1V-984-MONOMER"/>
<dbReference type="Proteomes" id="UP000001035">
    <property type="component" value="Chromosome 1"/>
</dbReference>
<dbReference type="GO" id="GO:0005737">
    <property type="term" value="C:cytoplasm"/>
    <property type="evidence" value="ECO:0007669"/>
    <property type="project" value="UniProtKB-SubCell"/>
</dbReference>
<dbReference type="GO" id="GO:0097163">
    <property type="term" value="F:sulfur carrier activity"/>
    <property type="evidence" value="ECO:0007669"/>
    <property type="project" value="UniProtKB-UniRule"/>
</dbReference>
<dbReference type="GO" id="GO:0016783">
    <property type="term" value="F:sulfurtransferase activity"/>
    <property type="evidence" value="ECO:0007669"/>
    <property type="project" value="InterPro"/>
</dbReference>
<dbReference type="GO" id="GO:0006777">
    <property type="term" value="P:Mo-molybdopterin cofactor biosynthetic process"/>
    <property type="evidence" value="ECO:0007669"/>
    <property type="project" value="UniProtKB-UniRule"/>
</dbReference>
<dbReference type="Gene3D" id="3.10.20.10">
    <property type="match status" value="1"/>
</dbReference>
<dbReference type="Gene3D" id="3.40.140.10">
    <property type="entry name" value="Cytidine Deaminase, domain 2"/>
    <property type="match status" value="1"/>
</dbReference>
<dbReference type="HAMAP" id="MF_00187">
    <property type="entry name" value="FdhD"/>
    <property type="match status" value="1"/>
</dbReference>
<dbReference type="InterPro" id="IPR016193">
    <property type="entry name" value="Cytidine_deaminase-like"/>
</dbReference>
<dbReference type="InterPro" id="IPR003786">
    <property type="entry name" value="FdhD"/>
</dbReference>
<dbReference type="NCBIfam" id="TIGR00129">
    <property type="entry name" value="fdhD_narQ"/>
    <property type="match status" value="1"/>
</dbReference>
<dbReference type="PANTHER" id="PTHR30592">
    <property type="entry name" value="FORMATE DEHYDROGENASE"/>
    <property type="match status" value="1"/>
</dbReference>
<dbReference type="PANTHER" id="PTHR30592:SF1">
    <property type="entry name" value="SULFUR CARRIER PROTEIN FDHD"/>
    <property type="match status" value="1"/>
</dbReference>
<dbReference type="Pfam" id="PF02634">
    <property type="entry name" value="FdhD-NarQ"/>
    <property type="match status" value="1"/>
</dbReference>
<dbReference type="PIRSF" id="PIRSF015626">
    <property type="entry name" value="FdhD"/>
    <property type="match status" value="1"/>
</dbReference>
<dbReference type="SUPFAM" id="SSF53927">
    <property type="entry name" value="Cytidine deaminase-like"/>
    <property type="match status" value="1"/>
</dbReference>
<gene>
    <name evidence="1" type="primary">fdhD</name>
    <name type="ordered locus">BceJ2315_08780</name>
    <name type="ORF">BCAL0888</name>
</gene>
<feature type="chain" id="PRO_1000098780" description="Sulfur carrier protein FdhD">
    <location>
        <begin position="1"/>
        <end position="278"/>
    </location>
</feature>
<feature type="active site" description="Cysteine persulfide intermediate" evidence="1">
    <location>
        <position position="124"/>
    </location>
</feature>
<name>FDHD_BURCJ</name>
<proteinExistence type="inferred from homology"/>
<organism>
    <name type="scientific">Burkholderia cenocepacia (strain ATCC BAA-245 / DSM 16553 / LMG 16656 / NCTC 13227 / J2315 / CF5610)</name>
    <name type="common">Burkholderia cepacia (strain J2315)</name>
    <dbReference type="NCBI Taxonomy" id="216591"/>
    <lineage>
        <taxon>Bacteria</taxon>
        <taxon>Pseudomonadati</taxon>
        <taxon>Pseudomonadota</taxon>
        <taxon>Betaproteobacteria</taxon>
        <taxon>Burkholderiales</taxon>
        <taxon>Burkholderiaceae</taxon>
        <taxon>Burkholderia</taxon>
        <taxon>Burkholderia cepacia complex</taxon>
    </lineage>
</organism>